<gene>
    <name evidence="1" type="primary">fluC</name>
    <name evidence="1" type="synonym">crcB</name>
    <name type="ordered locus">Rsph17029_0390</name>
</gene>
<feature type="chain" id="PRO_1000026411" description="Fluoride-specific ion channel FluC">
    <location>
        <begin position="1"/>
        <end position="124"/>
    </location>
</feature>
<feature type="transmembrane region" description="Helical" evidence="1">
    <location>
        <begin position="36"/>
        <end position="56"/>
    </location>
</feature>
<feature type="transmembrane region" description="Helical" evidence="1">
    <location>
        <begin position="63"/>
        <end position="83"/>
    </location>
</feature>
<feature type="transmembrane region" description="Helical" evidence="1">
    <location>
        <begin position="99"/>
        <end position="119"/>
    </location>
</feature>
<feature type="binding site" evidence="1">
    <location>
        <position position="73"/>
    </location>
    <ligand>
        <name>Na(+)</name>
        <dbReference type="ChEBI" id="CHEBI:29101"/>
        <note>structural</note>
    </ligand>
</feature>
<feature type="binding site" evidence="1">
    <location>
        <position position="76"/>
    </location>
    <ligand>
        <name>Na(+)</name>
        <dbReference type="ChEBI" id="CHEBI:29101"/>
        <note>structural</note>
    </ligand>
</feature>
<sequence>MISSLLQVALGGALGASARYLTNVGSMRLFGPAFPVGTMIVNVVGSFLMGVLVVVLAHKGNRYAPFLMTGMLGGFTTFSAFSLDAVTLYERGQAGLAAAYVGLSVGLSLAGLMAGMAAVRGWMA</sequence>
<organism>
    <name type="scientific">Cereibacter sphaeroides (strain ATCC 17029 / ATH 2.4.9)</name>
    <name type="common">Rhodobacter sphaeroides</name>
    <dbReference type="NCBI Taxonomy" id="349101"/>
    <lineage>
        <taxon>Bacteria</taxon>
        <taxon>Pseudomonadati</taxon>
        <taxon>Pseudomonadota</taxon>
        <taxon>Alphaproteobacteria</taxon>
        <taxon>Rhodobacterales</taxon>
        <taxon>Paracoccaceae</taxon>
        <taxon>Cereibacter</taxon>
    </lineage>
</organism>
<reference key="1">
    <citation type="submission" date="2007-02" db="EMBL/GenBank/DDBJ databases">
        <title>Complete sequence of chromosome 1 of Rhodobacter sphaeroides ATCC 17029.</title>
        <authorList>
            <person name="Copeland A."/>
            <person name="Lucas S."/>
            <person name="Lapidus A."/>
            <person name="Barry K."/>
            <person name="Detter J.C."/>
            <person name="Glavina del Rio T."/>
            <person name="Hammon N."/>
            <person name="Israni S."/>
            <person name="Dalin E."/>
            <person name="Tice H."/>
            <person name="Pitluck S."/>
            <person name="Kiss H."/>
            <person name="Brettin T."/>
            <person name="Bruce D."/>
            <person name="Han C."/>
            <person name="Tapia R."/>
            <person name="Gilna P."/>
            <person name="Schmutz J."/>
            <person name="Larimer F."/>
            <person name="Land M."/>
            <person name="Hauser L."/>
            <person name="Kyrpides N."/>
            <person name="Mikhailova N."/>
            <person name="Richardson P."/>
            <person name="Mackenzie C."/>
            <person name="Choudhary M."/>
            <person name="Donohue T.J."/>
            <person name="Kaplan S."/>
        </authorList>
    </citation>
    <scope>NUCLEOTIDE SEQUENCE [LARGE SCALE GENOMIC DNA]</scope>
    <source>
        <strain>ATCC 17029 / ATH 2.4.9</strain>
    </source>
</reference>
<protein>
    <recommendedName>
        <fullName evidence="1">Fluoride-specific ion channel FluC</fullName>
    </recommendedName>
</protein>
<evidence type="ECO:0000255" key="1">
    <source>
        <dbReference type="HAMAP-Rule" id="MF_00454"/>
    </source>
</evidence>
<name>FLUC_CERS1</name>
<keyword id="KW-0997">Cell inner membrane</keyword>
<keyword id="KW-1003">Cell membrane</keyword>
<keyword id="KW-0407">Ion channel</keyword>
<keyword id="KW-0406">Ion transport</keyword>
<keyword id="KW-0472">Membrane</keyword>
<keyword id="KW-0479">Metal-binding</keyword>
<keyword id="KW-0915">Sodium</keyword>
<keyword id="KW-0812">Transmembrane</keyword>
<keyword id="KW-1133">Transmembrane helix</keyword>
<keyword id="KW-0813">Transport</keyword>
<proteinExistence type="inferred from homology"/>
<dbReference type="EMBL" id="CP000577">
    <property type="protein sequence ID" value="ABN75506.1"/>
    <property type="molecule type" value="Genomic_DNA"/>
</dbReference>
<dbReference type="RefSeq" id="WP_009563665.1">
    <property type="nucleotide sequence ID" value="NC_009049.1"/>
</dbReference>
<dbReference type="SMR" id="A3PGP0"/>
<dbReference type="GeneID" id="67445529"/>
<dbReference type="KEGG" id="rsh:Rsph17029_0390"/>
<dbReference type="HOGENOM" id="CLU_114342_2_3_5"/>
<dbReference type="GO" id="GO:0005886">
    <property type="term" value="C:plasma membrane"/>
    <property type="evidence" value="ECO:0007669"/>
    <property type="project" value="UniProtKB-SubCell"/>
</dbReference>
<dbReference type="GO" id="GO:0062054">
    <property type="term" value="F:fluoride channel activity"/>
    <property type="evidence" value="ECO:0007669"/>
    <property type="project" value="UniProtKB-UniRule"/>
</dbReference>
<dbReference type="GO" id="GO:0046872">
    <property type="term" value="F:metal ion binding"/>
    <property type="evidence" value="ECO:0007669"/>
    <property type="project" value="UniProtKB-KW"/>
</dbReference>
<dbReference type="GO" id="GO:0140114">
    <property type="term" value="P:cellular detoxification of fluoride"/>
    <property type="evidence" value="ECO:0007669"/>
    <property type="project" value="UniProtKB-UniRule"/>
</dbReference>
<dbReference type="HAMAP" id="MF_00454">
    <property type="entry name" value="FluC"/>
    <property type="match status" value="1"/>
</dbReference>
<dbReference type="InterPro" id="IPR003691">
    <property type="entry name" value="FluC"/>
</dbReference>
<dbReference type="NCBIfam" id="NF010791">
    <property type="entry name" value="PRK14195.1"/>
    <property type="match status" value="1"/>
</dbReference>
<dbReference type="NCBIfam" id="NF010805">
    <property type="entry name" value="PRK14209.1"/>
    <property type="match status" value="1"/>
</dbReference>
<dbReference type="PANTHER" id="PTHR28259">
    <property type="entry name" value="FLUORIDE EXPORT PROTEIN 1-RELATED"/>
    <property type="match status" value="1"/>
</dbReference>
<dbReference type="PANTHER" id="PTHR28259:SF1">
    <property type="entry name" value="FLUORIDE EXPORT PROTEIN 1-RELATED"/>
    <property type="match status" value="1"/>
</dbReference>
<dbReference type="Pfam" id="PF02537">
    <property type="entry name" value="CRCB"/>
    <property type="match status" value="1"/>
</dbReference>
<comment type="function">
    <text evidence="1">Fluoride-specific ion channel. Important for reducing fluoride concentration in the cell, thus reducing its toxicity.</text>
</comment>
<comment type="catalytic activity">
    <reaction evidence="1">
        <text>fluoride(in) = fluoride(out)</text>
        <dbReference type="Rhea" id="RHEA:76159"/>
        <dbReference type="ChEBI" id="CHEBI:17051"/>
    </reaction>
    <physiologicalReaction direction="left-to-right" evidence="1">
        <dbReference type="Rhea" id="RHEA:76160"/>
    </physiologicalReaction>
</comment>
<comment type="activity regulation">
    <text evidence="1">Na(+) is not transported, but it plays an essential structural role and its presence is essential for fluoride channel function.</text>
</comment>
<comment type="subcellular location">
    <subcellularLocation>
        <location evidence="1">Cell inner membrane</location>
        <topology evidence="1">Multi-pass membrane protein</topology>
    </subcellularLocation>
</comment>
<comment type="similarity">
    <text evidence="1">Belongs to the fluoride channel Fluc/FEX (TC 1.A.43) family.</text>
</comment>
<accession>A3PGP0</accession>